<gene>
    <name evidence="1" type="primary">rpsN</name>
    <name type="ordered locus">KPK_0411</name>
</gene>
<feature type="chain" id="PRO_1000128426" description="Small ribosomal subunit protein uS14">
    <location>
        <begin position="1"/>
        <end position="101"/>
    </location>
</feature>
<keyword id="KW-0687">Ribonucleoprotein</keyword>
<keyword id="KW-0689">Ribosomal protein</keyword>
<keyword id="KW-0694">RNA-binding</keyword>
<keyword id="KW-0699">rRNA-binding</keyword>
<name>RS14_KLEP3</name>
<evidence type="ECO:0000255" key="1">
    <source>
        <dbReference type="HAMAP-Rule" id="MF_00537"/>
    </source>
</evidence>
<evidence type="ECO:0000305" key="2"/>
<proteinExistence type="inferred from homology"/>
<organism>
    <name type="scientific">Klebsiella pneumoniae (strain 342)</name>
    <dbReference type="NCBI Taxonomy" id="507522"/>
    <lineage>
        <taxon>Bacteria</taxon>
        <taxon>Pseudomonadati</taxon>
        <taxon>Pseudomonadota</taxon>
        <taxon>Gammaproteobacteria</taxon>
        <taxon>Enterobacterales</taxon>
        <taxon>Enterobacteriaceae</taxon>
        <taxon>Klebsiella/Raoultella group</taxon>
        <taxon>Klebsiella</taxon>
        <taxon>Klebsiella pneumoniae complex</taxon>
    </lineage>
</organism>
<comment type="function">
    <text evidence="1">Binds 16S rRNA, required for the assembly of 30S particles and may also be responsible for determining the conformation of the 16S rRNA at the A site.</text>
</comment>
<comment type="subunit">
    <text evidence="1">Part of the 30S ribosomal subunit. Contacts proteins S3 and S10.</text>
</comment>
<comment type="similarity">
    <text evidence="1">Belongs to the universal ribosomal protein uS14 family.</text>
</comment>
<protein>
    <recommendedName>
        <fullName evidence="1">Small ribosomal subunit protein uS14</fullName>
    </recommendedName>
    <alternativeName>
        <fullName evidence="2">30S ribosomal protein S14</fullName>
    </alternativeName>
</protein>
<accession>B5XNA6</accession>
<dbReference type="EMBL" id="CP000964">
    <property type="protein sequence ID" value="ACI10909.1"/>
    <property type="molecule type" value="Genomic_DNA"/>
</dbReference>
<dbReference type="SMR" id="B5XNA6"/>
<dbReference type="KEGG" id="kpe:KPK_0411"/>
<dbReference type="HOGENOM" id="CLU_139869_0_1_6"/>
<dbReference type="Proteomes" id="UP000001734">
    <property type="component" value="Chromosome"/>
</dbReference>
<dbReference type="GO" id="GO:0005737">
    <property type="term" value="C:cytoplasm"/>
    <property type="evidence" value="ECO:0007669"/>
    <property type="project" value="UniProtKB-ARBA"/>
</dbReference>
<dbReference type="GO" id="GO:0015935">
    <property type="term" value="C:small ribosomal subunit"/>
    <property type="evidence" value="ECO:0007669"/>
    <property type="project" value="TreeGrafter"/>
</dbReference>
<dbReference type="GO" id="GO:0019843">
    <property type="term" value="F:rRNA binding"/>
    <property type="evidence" value="ECO:0007669"/>
    <property type="project" value="UniProtKB-UniRule"/>
</dbReference>
<dbReference type="GO" id="GO:0003735">
    <property type="term" value="F:structural constituent of ribosome"/>
    <property type="evidence" value="ECO:0007669"/>
    <property type="project" value="InterPro"/>
</dbReference>
<dbReference type="GO" id="GO:0006412">
    <property type="term" value="P:translation"/>
    <property type="evidence" value="ECO:0007669"/>
    <property type="project" value="UniProtKB-UniRule"/>
</dbReference>
<dbReference type="FunFam" id="1.10.287.1480:FF:000001">
    <property type="entry name" value="30S ribosomal protein S14"/>
    <property type="match status" value="1"/>
</dbReference>
<dbReference type="Gene3D" id="1.10.287.1480">
    <property type="match status" value="1"/>
</dbReference>
<dbReference type="HAMAP" id="MF_00537">
    <property type="entry name" value="Ribosomal_uS14_1"/>
    <property type="match status" value="1"/>
</dbReference>
<dbReference type="InterPro" id="IPR001209">
    <property type="entry name" value="Ribosomal_uS14"/>
</dbReference>
<dbReference type="InterPro" id="IPR023036">
    <property type="entry name" value="Ribosomal_uS14_bac/plastid"/>
</dbReference>
<dbReference type="InterPro" id="IPR018271">
    <property type="entry name" value="Ribosomal_uS14_CS"/>
</dbReference>
<dbReference type="NCBIfam" id="NF006477">
    <property type="entry name" value="PRK08881.1"/>
    <property type="match status" value="1"/>
</dbReference>
<dbReference type="PANTHER" id="PTHR19836">
    <property type="entry name" value="30S RIBOSOMAL PROTEIN S14"/>
    <property type="match status" value="1"/>
</dbReference>
<dbReference type="PANTHER" id="PTHR19836:SF19">
    <property type="entry name" value="SMALL RIBOSOMAL SUBUNIT PROTEIN US14M"/>
    <property type="match status" value="1"/>
</dbReference>
<dbReference type="Pfam" id="PF00253">
    <property type="entry name" value="Ribosomal_S14"/>
    <property type="match status" value="1"/>
</dbReference>
<dbReference type="SUPFAM" id="SSF57716">
    <property type="entry name" value="Glucocorticoid receptor-like (DNA-binding domain)"/>
    <property type="match status" value="1"/>
</dbReference>
<dbReference type="PROSITE" id="PS00527">
    <property type="entry name" value="RIBOSOMAL_S14"/>
    <property type="match status" value="1"/>
</dbReference>
<reference key="1">
    <citation type="journal article" date="2008" name="PLoS Genet.">
        <title>Complete genome sequence of the N2-fixing broad host range endophyte Klebsiella pneumoniae 342 and virulence predictions verified in mice.</title>
        <authorList>
            <person name="Fouts D.E."/>
            <person name="Tyler H.L."/>
            <person name="DeBoy R.T."/>
            <person name="Daugherty S."/>
            <person name="Ren Q."/>
            <person name="Badger J.H."/>
            <person name="Durkin A.S."/>
            <person name="Huot H."/>
            <person name="Shrivastava S."/>
            <person name="Kothari S."/>
            <person name="Dodson R.J."/>
            <person name="Mohamoud Y."/>
            <person name="Khouri H."/>
            <person name="Roesch L.F.W."/>
            <person name="Krogfelt K.A."/>
            <person name="Struve C."/>
            <person name="Triplett E.W."/>
            <person name="Methe B.A."/>
        </authorList>
    </citation>
    <scope>NUCLEOTIDE SEQUENCE [LARGE SCALE GENOMIC DNA]</scope>
    <source>
        <strain>342</strain>
    </source>
</reference>
<sequence length="101" mass="11579">MAKQSMKAREVKRVALADKFFAKRAELKAIISDVNATDEDRWNAVLKLQTLPRDSSPSRQRNRCRQTGRPHGFLRKFGLSRIKVREAAMRGEIPGLKKASW</sequence>